<sequence length="216" mass="23766">MNLILMGLPGAGKGTQAEQIVAKYNIPHISTGDMFRAAMKAETELGLQAKSFIDKGALVPDEVTIGIVRERLSQEDCKKGFLLDGFPRTVAQASALEEIMKDLGKKIDYVLNINVDSGLLLKRLTGRRICKECGATYHLEFNPPAKADVCDKCGGELYQRSDDNEETVANRLEVNIKQTKPLLDFYEELGYLQSINGEQDINKVFADIDVLIGGLA</sequence>
<proteinExistence type="inferred from homology"/>
<comment type="function">
    <text evidence="1">Catalyzes the reversible transfer of the terminal phosphate group between ATP and AMP. Plays an important role in cellular energy homeostasis and in adenine nucleotide metabolism.</text>
</comment>
<comment type="catalytic activity">
    <reaction evidence="1">
        <text>AMP + ATP = 2 ADP</text>
        <dbReference type="Rhea" id="RHEA:12973"/>
        <dbReference type="ChEBI" id="CHEBI:30616"/>
        <dbReference type="ChEBI" id="CHEBI:456215"/>
        <dbReference type="ChEBI" id="CHEBI:456216"/>
        <dbReference type="EC" id="2.7.4.3"/>
    </reaction>
</comment>
<comment type="pathway">
    <text evidence="1">Purine metabolism; AMP biosynthesis via salvage pathway; AMP from ADP: step 1/1.</text>
</comment>
<comment type="subunit">
    <text evidence="1">Monomer.</text>
</comment>
<comment type="subcellular location">
    <subcellularLocation>
        <location evidence="1">Cytoplasm</location>
    </subcellularLocation>
</comment>
<comment type="domain">
    <text evidence="1">Consists of three domains, a large central CORE domain and two small peripheral domains, NMPbind and LID, which undergo movements during catalysis. The LID domain closes over the site of phosphoryl transfer upon ATP binding. Assembling and dissambling the active center during each catalytic cycle provides an effective means to prevent ATP hydrolysis. Some bacteria have evolved a zinc-coordinating structure that stabilizes the LID domain.</text>
</comment>
<comment type="similarity">
    <text evidence="1">Belongs to the adenylate kinase family.</text>
</comment>
<gene>
    <name evidence="1" type="primary">adk</name>
    <name type="ordered locus">Bcer98_0125</name>
</gene>
<reference key="1">
    <citation type="journal article" date="2008" name="Chem. Biol. Interact.">
        <title>Extending the Bacillus cereus group genomics to putative food-borne pathogens of different toxicity.</title>
        <authorList>
            <person name="Lapidus A."/>
            <person name="Goltsman E."/>
            <person name="Auger S."/>
            <person name="Galleron N."/>
            <person name="Segurens B."/>
            <person name="Dossat C."/>
            <person name="Land M.L."/>
            <person name="Broussolle V."/>
            <person name="Brillard J."/>
            <person name="Guinebretiere M.-H."/>
            <person name="Sanchis V."/>
            <person name="Nguen-the C."/>
            <person name="Lereclus D."/>
            <person name="Richardson P."/>
            <person name="Wincker P."/>
            <person name="Weissenbach J."/>
            <person name="Ehrlich S.D."/>
            <person name="Sorokin A."/>
        </authorList>
    </citation>
    <scope>NUCLEOTIDE SEQUENCE [LARGE SCALE GENOMIC DNA]</scope>
    <source>
        <strain>DSM 22905 / CIP 110041 / 391-98 / NVH 391-98</strain>
    </source>
</reference>
<evidence type="ECO:0000255" key="1">
    <source>
        <dbReference type="HAMAP-Rule" id="MF_00235"/>
    </source>
</evidence>
<accession>A7GK41</accession>
<protein>
    <recommendedName>
        <fullName evidence="1">Adenylate kinase</fullName>
        <shortName evidence="1">AK</shortName>
        <ecNumber evidence="1">2.7.4.3</ecNumber>
    </recommendedName>
    <alternativeName>
        <fullName evidence="1">ATP-AMP transphosphorylase</fullName>
    </alternativeName>
    <alternativeName>
        <fullName evidence="1">ATP:AMP phosphotransferase</fullName>
    </alternativeName>
    <alternativeName>
        <fullName evidence="1">Adenylate monophosphate kinase</fullName>
    </alternativeName>
</protein>
<organism>
    <name type="scientific">Bacillus cytotoxicus (strain DSM 22905 / CIP 110041 / 391-98 / NVH 391-98)</name>
    <dbReference type="NCBI Taxonomy" id="315749"/>
    <lineage>
        <taxon>Bacteria</taxon>
        <taxon>Bacillati</taxon>
        <taxon>Bacillota</taxon>
        <taxon>Bacilli</taxon>
        <taxon>Bacillales</taxon>
        <taxon>Bacillaceae</taxon>
        <taxon>Bacillus</taxon>
        <taxon>Bacillus cereus group</taxon>
    </lineage>
</organism>
<dbReference type="EC" id="2.7.4.3" evidence="1"/>
<dbReference type="EMBL" id="CP000764">
    <property type="protein sequence ID" value="ABS20499.1"/>
    <property type="molecule type" value="Genomic_DNA"/>
</dbReference>
<dbReference type="RefSeq" id="WP_011983264.1">
    <property type="nucleotide sequence ID" value="NC_009674.1"/>
</dbReference>
<dbReference type="SMR" id="A7GK41"/>
<dbReference type="STRING" id="315749.Bcer98_0125"/>
<dbReference type="GeneID" id="33895446"/>
<dbReference type="KEGG" id="bcy:Bcer98_0125"/>
<dbReference type="eggNOG" id="COG0563">
    <property type="taxonomic scope" value="Bacteria"/>
</dbReference>
<dbReference type="HOGENOM" id="CLU_032354_1_2_9"/>
<dbReference type="OrthoDB" id="9805030at2"/>
<dbReference type="UniPathway" id="UPA00588">
    <property type="reaction ID" value="UER00649"/>
</dbReference>
<dbReference type="Proteomes" id="UP000002300">
    <property type="component" value="Chromosome"/>
</dbReference>
<dbReference type="GO" id="GO:0005737">
    <property type="term" value="C:cytoplasm"/>
    <property type="evidence" value="ECO:0007669"/>
    <property type="project" value="UniProtKB-SubCell"/>
</dbReference>
<dbReference type="GO" id="GO:0004017">
    <property type="term" value="F:adenylate kinase activity"/>
    <property type="evidence" value="ECO:0007669"/>
    <property type="project" value="UniProtKB-UniRule"/>
</dbReference>
<dbReference type="GO" id="GO:0005524">
    <property type="term" value="F:ATP binding"/>
    <property type="evidence" value="ECO:0007669"/>
    <property type="project" value="UniProtKB-UniRule"/>
</dbReference>
<dbReference type="GO" id="GO:0008270">
    <property type="term" value="F:zinc ion binding"/>
    <property type="evidence" value="ECO:0007669"/>
    <property type="project" value="UniProtKB-UniRule"/>
</dbReference>
<dbReference type="GO" id="GO:0044209">
    <property type="term" value="P:AMP salvage"/>
    <property type="evidence" value="ECO:0007669"/>
    <property type="project" value="UniProtKB-UniRule"/>
</dbReference>
<dbReference type="CDD" id="cd01428">
    <property type="entry name" value="ADK"/>
    <property type="match status" value="1"/>
</dbReference>
<dbReference type="FunFam" id="3.40.50.300:FF:000106">
    <property type="entry name" value="Adenylate kinase mitochondrial"/>
    <property type="match status" value="1"/>
</dbReference>
<dbReference type="Gene3D" id="3.40.50.300">
    <property type="entry name" value="P-loop containing nucleotide triphosphate hydrolases"/>
    <property type="match status" value="1"/>
</dbReference>
<dbReference type="HAMAP" id="MF_00235">
    <property type="entry name" value="Adenylate_kinase_Adk"/>
    <property type="match status" value="1"/>
</dbReference>
<dbReference type="InterPro" id="IPR006259">
    <property type="entry name" value="Adenyl_kin_sub"/>
</dbReference>
<dbReference type="InterPro" id="IPR000850">
    <property type="entry name" value="Adenylat/UMP-CMP_kin"/>
</dbReference>
<dbReference type="InterPro" id="IPR033690">
    <property type="entry name" value="Adenylat_kinase_CS"/>
</dbReference>
<dbReference type="InterPro" id="IPR007862">
    <property type="entry name" value="Adenylate_kinase_lid-dom"/>
</dbReference>
<dbReference type="InterPro" id="IPR027417">
    <property type="entry name" value="P-loop_NTPase"/>
</dbReference>
<dbReference type="NCBIfam" id="TIGR01351">
    <property type="entry name" value="adk"/>
    <property type="match status" value="1"/>
</dbReference>
<dbReference type="NCBIfam" id="NF001380">
    <property type="entry name" value="PRK00279.1-2"/>
    <property type="match status" value="1"/>
</dbReference>
<dbReference type="NCBIfam" id="NF001381">
    <property type="entry name" value="PRK00279.1-3"/>
    <property type="match status" value="1"/>
</dbReference>
<dbReference type="NCBIfam" id="NF011100">
    <property type="entry name" value="PRK14527.1"/>
    <property type="match status" value="1"/>
</dbReference>
<dbReference type="PANTHER" id="PTHR23359">
    <property type="entry name" value="NUCLEOTIDE KINASE"/>
    <property type="match status" value="1"/>
</dbReference>
<dbReference type="Pfam" id="PF00406">
    <property type="entry name" value="ADK"/>
    <property type="match status" value="1"/>
</dbReference>
<dbReference type="Pfam" id="PF05191">
    <property type="entry name" value="ADK_lid"/>
    <property type="match status" value="1"/>
</dbReference>
<dbReference type="PRINTS" id="PR00094">
    <property type="entry name" value="ADENYLTKNASE"/>
</dbReference>
<dbReference type="SUPFAM" id="SSF52540">
    <property type="entry name" value="P-loop containing nucleoside triphosphate hydrolases"/>
    <property type="match status" value="1"/>
</dbReference>
<dbReference type="PROSITE" id="PS00113">
    <property type="entry name" value="ADENYLATE_KINASE"/>
    <property type="match status" value="1"/>
</dbReference>
<feature type="chain" id="PRO_1000078262" description="Adenylate kinase">
    <location>
        <begin position="1"/>
        <end position="216"/>
    </location>
</feature>
<feature type="region of interest" description="NMP" evidence="1">
    <location>
        <begin position="30"/>
        <end position="59"/>
    </location>
</feature>
<feature type="region of interest" description="LID" evidence="1">
    <location>
        <begin position="126"/>
        <end position="163"/>
    </location>
</feature>
<feature type="binding site" evidence="1">
    <location>
        <begin position="10"/>
        <end position="15"/>
    </location>
    <ligand>
        <name>ATP</name>
        <dbReference type="ChEBI" id="CHEBI:30616"/>
    </ligand>
</feature>
<feature type="binding site" evidence="1">
    <location>
        <position position="31"/>
    </location>
    <ligand>
        <name>AMP</name>
        <dbReference type="ChEBI" id="CHEBI:456215"/>
    </ligand>
</feature>
<feature type="binding site" evidence="1">
    <location>
        <position position="36"/>
    </location>
    <ligand>
        <name>AMP</name>
        <dbReference type="ChEBI" id="CHEBI:456215"/>
    </ligand>
</feature>
<feature type="binding site" evidence="1">
    <location>
        <begin position="57"/>
        <end position="59"/>
    </location>
    <ligand>
        <name>AMP</name>
        <dbReference type="ChEBI" id="CHEBI:456215"/>
    </ligand>
</feature>
<feature type="binding site" evidence="1">
    <location>
        <begin position="85"/>
        <end position="88"/>
    </location>
    <ligand>
        <name>AMP</name>
        <dbReference type="ChEBI" id="CHEBI:456215"/>
    </ligand>
</feature>
<feature type="binding site" evidence="1">
    <location>
        <position position="92"/>
    </location>
    <ligand>
        <name>AMP</name>
        <dbReference type="ChEBI" id="CHEBI:456215"/>
    </ligand>
</feature>
<feature type="binding site" evidence="1">
    <location>
        <position position="127"/>
    </location>
    <ligand>
        <name>ATP</name>
        <dbReference type="ChEBI" id="CHEBI:30616"/>
    </ligand>
</feature>
<feature type="binding site" evidence="1">
    <location>
        <position position="130"/>
    </location>
    <ligand>
        <name>Zn(2+)</name>
        <dbReference type="ChEBI" id="CHEBI:29105"/>
        <note>structural</note>
    </ligand>
</feature>
<feature type="binding site" evidence="1">
    <location>
        <position position="133"/>
    </location>
    <ligand>
        <name>Zn(2+)</name>
        <dbReference type="ChEBI" id="CHEBI:29105"/>
        <note>structural</note>
    </ligand>
</feature>
<feature type="binding site" evidence="1">
    <location>
        <begin position="136"/>
        <end position="137"/>
    </location>
    <ligand>
        <name>ATP</name>
        <dbReference type="ChEBI" id="CHEBI:30616"/>
    </ligand>
</feature>
<feature type="binding site" evidence="1">
    <location>
        <position position="150"/>
    </location>
    <ligand>
        <name>Zn(2+)</name>
        <dbReference type="ChEBI" id="CHEBI:29105"/>
        <note>structural</note>
    </ligand>
</feature>
<feature type="binding site" evidence="1">
    <location>
        <position position="153"/>
    </location>
    <ligand>
        <name>Zn(2+)</name>
        <dbReference type="ChEBI" id="CHEBI:29105"/>
        <note>structural</note>
    </ligand>
</feature>
<feature type="binding site" evidence="1">
    <location>
        <position position="160"/>
    </location>
    <ligand>
        <name>AMP</name>
        <dbReference type="ChEBI" id="CHEBI:456215"/>
    </ligand>
</feature>
<feature type="binding site" evidence="1">
    <location>
        <position position="171"/>
    </location>
    <ligand>
        <name>AMP</name>
        <dbReference type="ChEBI" id="CHEBI:456215"/>
    </ligand>
</feature>
<feature type="binding site" evidence="1">
    <location>
        <position position="199"/>
    </location>
    <ligand>
        <name>ATP</name>
        <dbReference type="ChEBI" id="CHEBI:30616"/>
    </ligand>
</feature>
<name>KAD_BACCN</name>
<keyword id="KW-0067">ATP-binding</keyword>
<keyword id="KW-0963">Cytoplasm</keyword>
<keyword id="KW-0418">Kinase</keyword>
<keyword id="KW-0479">Metal-binding</keyword>
<keyword id="KW-0545">Nucleotide biosynthesis</keyword>
<keyword id="KW-0547">Nucleotide-binding</keyword>
<keyword id="KW-0808">Transferase</keyword>
<keyword id="KW-0862">Zinc</keyword>